<keyword id="KW-0119">Carbohydrate metabolism</keyword>
<keyword id="KW-0963">Cytoplasm</keyword>
<keyword id="KW-0299">Galactose metabolism</keyword>
<keyword id="KW-0548">Nucleotidyltransferase</keyword>
<keyword id="KW-0808">Transferase</keyword>
<sequence>MSIYQSIQDFISLALQNGTIEPLDELYHRNQLLHFLGLNDWAEVDKEVHETNSLILMDQLLAIANENNVIAKGQDEFYEAALMNFMTPRPSKINHDFWEKYQASPDDATQYFYELAQQVNQVKTRDIARNIAFSHLTKYGKLEITINLSKPEKDPKAIAAAKLVKASSYPACQLCLENEGFYGLGNKPARSNHRIIQVSINGEDWGFQYSPYAYFNEHSILLNAKHQPMEINKRAFDNLLGFLDKFPNYMIGSNADLPIVGGSILTHDHYQAGRHDFPMAKAELRETIELAHFPEVSCGIVNWPMSVLRLASENQVELSKAADDFLKKWQVYSDESLQIKAKSTDGTPHHTITPIARIRDGKYELDLVLRDNNTNEKYPDGIFHPHPALHHIKKENIGLIEVMGLAILPARLGTELLEVEKYLLNQDNQMDEIHKAWAEQLKNEEHFTRETVHATVQGAVGEVFEEVLKDAGVFKDTQEGHEGFRKFIDFVNQ</sequence>
<proteinExistence type="inferred from homology"/>
<protein>
    <recommendedName>
        <fullName evidence="1">Galactose-1-phosphate uridylyltransferase</fullName>
        <shortName evidence="1">Gal-1-P uridylyltransferase</shortName>
        <ecNumber evidence="1">2.7.7.12</ecNumber>
    </recommendedName>
    <alternativeName>
        <fullName evidence="1">UDP-glucose--hexose-1-phosphate uridylyltransferase</fullName>
    </alternativeName>
</protein>
<reference key="1">
    <citation type="submission" date="1998-09" db="EMBL/GenBank/DDBJ databases">
        <title>Characterization, expression and mutations of the Lactococcus lactis galAMKTE genes involved in galactose utilization via the Leloir pathway.</title>
        <authorList>
            <person name="Grossiord B.P."/>
            <person name="Luesink E.J."/>
            <person name="Vaughan E.E."/>
            <person name="Kuipers O.P."/>
            <person name="De Vos W.M."/>
        </authorList>
    </citation>
    <scope>NUCLEOTIDE SEQUENCE [GENOMIC DNA]</scope>
</reference>
<reference key="2">
    <citation type="journal article" date="2007" name="J. Bacteriol.">
        <title>The complete genome sequence of the lactic acid bacterial paradigm Lactococcus lactis subsp. cremoris MG1363.</title>
        <authorList>
            <person name="Wegmann U."/>
            <person name="O'Connell-Motherway M."/>
            <person name="Zomer A."/>
            <person name="Buist G."/>
            <person name="Shearman C."/>
            <person name="Canchaya C."/>
            <person name="Ventura M."/>
            <person name="Goesmann A."/>
            <person name="Gasson M.J."/>
            <person name="Kuipers O.P."/>
            <person name="van Sinderen D."/>
            <person name="Kok J."/>
        </authorList>
    </citation>
    <scope>NUCLEOTIDE SEQUENCE [LARGE SCALE GENOMIC DNA]</scope>
    <source>
        <strain>MG1363</strain>
    </source>
</reference>
<accession>Q9S6S3</accession>
<accession>A2RNB3</accession>
<evidence type="ECO:0000255" key="1">
    <source>
        <dbReference type="HAMAP-Rule" id="MF_00571"/>
    </source>
</evidence>
<comment type="catalytic activity">
    <reaction evidence="1">
        <text>alpha-D-galactose 1-phosphate + UDP-alpha-D-glucose = alpha-D-glucose 1-phosphate + UDP-alpha-D-galactose</text>
        <dbReference type="Rhea" id="RHEA:13989"/>
        <dbReference type="ChEBI" id="CHEBI:58336"/>
        <dbReference type="ChEBI" id="CHEBI:58601"/>
        <dbReference type="ChEBI" id="CHEBI:58885"/>
        <dbReference type="ChEBI" id="CHEBI:66914"/>
        <dbReference type="EC" id="2.7.7.12"/>
    </reaction>
</comment>
<comment type="pathway">
    <text evidence="1">Carbohydrate metabolism; galactose metabolism.</text>
</comment>
<comment type="subcellular location">
    <subcellularLocation>
        <location evidence="1">Cytoplasm</location>
    </subcellularLocation>
</comment>
<comment type="similarity">
    <text evidence="1">Belongs to the galactose-1-phosphate uridylyltransferase type 2 family.</text>
</comment>
<gene>
    <name evidence="1" type="primary">galT</name>
    <name type="ordered locus">llmg_2234</name>
</gene>
<name>GALT_LACLM</name>
<dbReference type="EC" id="2.7.7.12" evidence="1"/>
<dbReference type="EMBL" id="AJ011653">
    <property type="protein sequence ID" value="CAB44217.1"/>
    <property type="molecule type" value="Genomic_DNA"/>
</dbReference>
<dbReference type="EMBL" id="AM406671">
    <property type="protein sequence ID" value="CAL98801.1"/>
    <property type="molecule type" value="Genomic_DNA"/>
</dbReference>
<dbReference type="RefSeq" id="WP_011835925.1">
    <property type="nucleotide sequence ID" value="NC_009004.1"/>
</dbReference>
<dbReference type="STRING" id="416870.llmg_2234"/>
<dbReference type="KEGG" id="llm:llmg_2234"/>
<dbReference type="eggNOG" id="COG4468">
    <property type="taxonomic scope" value="Bacteria"/>
</dbReference>
<dbReference type="HOGENOM" id="CLU_047799_0_0_9"/>
<dbReference type="OrthoDB" id="2293at2"/>
<dbReference type="PhylomeDB" id="Q9S6S3"/>
<dbReference type="UniPathway" id="UPA00214"/>
<dbReference type="Proteomes" id="UP000000364">
    <property type="component" value="Chromosome"/>
</dbReference>
<dbReference type="GO" id="GO:0005737">
    <property type="term" value="C:cytoplasm"/>
    <property type="evidence" value="ECO:0007669"/>
    <property type="project" value="UniProtKB-SubCell"/>
</dbReference>
<dbReference type="GO" id="GO:0008108">
    <property type="term" value="F:UDP-glucose:hexose-1-phosphate uridylyltransferase activity"/>
    <property type="evidence" value="ECO:0007669"/>
    <property type="project" value="UniProtKB-UniRule"/>
</dbReference>
<dbReference type="GO" id="GO:0006012">
    <property type="term" value="P:galactose metabolic process"/>
    <property type="evidence" value="ECO:0007669"/>
    <property type="project" value="UniProtKB-UniRule"/>
</dbReference>
<dbReference type="HAMAP" id="MF_00571">
    <property type="entry name" value="GalP_UDP_trans"/>
    <property type="match status" value="1"/>
</dbReference>
<dbReference type="InterPro" id="IPR000766">
    <property type="entry name" value="GalP_uridyl_Trfase_II"/>
</dbReference>
<dbReference type="InterPro" id="IPR023425">
    <property type="entry name" value="GalP_uridyl_Trfase_II_CS"/>
</dbReference>
<dbReference type="InterPro" id="IPR005850">
    <property type="entry name" value="GalP_Utransf_C"/>
</dbReference>
<dbReference type="InterPro" id="IPR005849">
    <property type="entry name" value="GalP_Utransf_N"/>
</dbReference>
<dbReference type="NCBIfam" id="TIGR01239">
    <property type="entry name" value="galT_2"/>
    <property type="match status" value="1"/>
</dbReference>
<dbReference type="NCBIfam" id="NF003629">
    <property type="entry name" value="PRK05270.1-2"/>
    <property type="match status" value="1"/>
</dbReference>
<dbReference type="NCBIfam" id="NF003633">
    <property type="entry name" value="PRK05270.2-2"/>
    <property type="match status" value="1"/>
</dbReference>
<dbReference type="NCBIfam" id="NF003634">
    <property type="entry name" value="PRK05270.2-3"/>
    <property type="match status" value="1"/>
</dbReference>
<dbReference type="PANTHER" id="PTHR39191:SF1">
    <property type="entry name" value="DUF4922 DOMAIN-CONTAINING PROTEIN"/>
    <property type="match status" value="1"/>
</dbReference>
<dbReference type="PANTHER" id="PTHR39191">
    <property type="entry name" value="GALACTOSE-1-PHOSPHATE URIDYLYLTRANSFERASE"/>
    <property type="match status" value="1"/>
</dbReference>
<dbReference type="Pfam" id="PF02744">
    <property type="entry name" value="GalP_UDP_tr_C"/>
    <property type="match status" value="1"/>
</dbReference>
<dbReference type="Pfam" id="PF01087">
    <property type="entry name" value="GalP_UDP_transf"/>
    <property type="match status" value="1"/>
</dbReference>
<dbReference type="PIRSF" id="PIRSF006005">
    <property type="entry name" value="GalT_BS"/>
    <property type="match status" value="1"/>
</dbReference>
<dbReference type="PROSITE" id="PS01163">
    <property type="entry name" value="GAL_P_UDP_TRANSF_II"/>
    <property type="match status" value="1"/>
</dbReference>
<feature type="chain" id="PRO_0000169909" description="Galactose-1-phosphate uridylyltransferase">
    <location>
        <begin position="1"/>
        <end position="493"/>
    </location>
</feature>
<organism>
    <name type="scientific">Lactococcus lactis subsp. cremoris (strain MG1363)</name>
    <dbReference type="NCBI Taxonomy" id="416870"/>
    <lineage>
        <taxon>Bacteria</taxon>
        <taxon>Bacillati</taxon>
        <taxon>Bacillota</taxon>
        <taxon>Bacilli</taxon>
        <taxon>Lactobacillales</taxon>
        <taxon>Streptococcaceae</taxon>
        <taxon>Lactococcus</taxon>
        <taxon>Lactococcus cremoris subsp. cremoris</taxon>
    </lineage>
</organism>